<reference key="1">
    <citation type="journal article" date="2005" name="Science">
        <title>The transcriptional landscape of the mammalian genome.</title>
        <authorList>
            <person name="Carninci P."/>
            <person name="Kasukawa T."/>
            <person name="Katayama S."/>
            <person name="Gough J."/>
            <person name="Frith M.C."/>
            <person name="Maeda N."/>
            <person name="Oyama R."/>
            <person name="Ravasi T."/>
            <person name="Lenhard B."/>
            <person name="Wells C."/>
            <person name="Kodzius R."/>
            <person name="Shimokawa K."/>
            <person name="Bajic V.B."/>
            <person name="Brenner S.E."/>
            <person name="Batalov S."/>
            <person name="Forrest A.R."/>
            <person name="Zavolan M."/>
            <person name="Davis M.J."/>
            <person name="Wilming L.G."/>
            <person name="Aidinis V."/>
            <person name="Allen J.E."/>
            <person name="Ambesi-Impiombato A."/>
            <person name="Apweiler R."/>
            <person name="Aturaliya R.N."/>
            <person name="Bailey T.L."/>
            <person name="Bansal M."/>
            <person name="Baxter L."/>
            <person name="Beisel K.W."/>
            <person name="Bersano T."/>
            <person name="Bono H."/>
            <person name="Chalk A.M."/>
            <person name="Chiu K.P."/>
            <person name="Choudhary V."/>
            <person name="Christoffels A."/>
            <person name="Clutterbuck D.R."/>
            <person name="Crowe M.L."/>
            <person name="Dalla E."/>
            <person name="Dalrymple B.P."/>
            <person name="de Bono B."/>
            <person name="Della Gatta G."/>
            <person name="di Bernardo D."/>
            <person name="Down T."/>
            <person name="Engstrom P."/>
            <person name="Fagiolini M."/>
            <person name="Faulkner G."/>
            <person name="Fletcher C.F."/>
            <person name="Fukushima T."/>
            <person name="Furuno M."/>
            <person name="Futaki S."/>
            <person name="Gariboldi M."/>
            <person name="Georgii-Hemming P."/>
            <person name="Gingeras T.R."/>
            <person name="Gojobori T."/>
            <person name="Green R.E."/>
            <person name="Gustincich S."/>
            <person name="Harbers M."/>
            <person name="Hayashi Y."/>
            <person name="Hensch T.K."/>
            <person name="Hirokawa N."/>
            <person name="Hill D."/>
            <person name="Huminiecki L."/>
            <person name="Iacono M."/>
            <person name="Ikeo K."/>
            <person name="Iwama A."/>
            <person name="Ishikawa T."/>
            <person name="Jakt M."/>
            <person name="Kanapin A."/>
            <person name="Katoh M."/>
            <person name="Kawasawa Y."/>
            <person name="Kelso J."/>
            <person name="Kitamura H."/>
            <person name="Kitano H."/>
            <person name="Kollias G."/>
            <person name="Krishnan S.P."/>
            <person name="Kruger A."/>
            <person name="Kummerfeld S.K."/>
            <person name="Kurochkin I.V."/>
            <person name="Lareau L.F."/>
            <person name="Lazarevic D."/>
            <person name="Lipovich L."/>
            <person name="Liu J."/>
            <person name="Liuni S."/>
            <person name="McWilliam S."/>
            <person name="Madan Babu M."/>
            <person name="Madera M."/>
            <person name="Marchionni L."/>
            <person name="Matsuda H."/>
            <person name="Matsuzawa S."/>
            <person name="Miki H."/>
            <person name="Mignone F."/>
            <person name="Miyake S."/>
            <person name="Morris K."/>
            <person name="Mottagui-Tabar S."/>
            <person name="Mulder N."/>
            <person name="Nakano N."/>
            <person name="Nakauchi H."/>
            <person name="Ng P."/>
            <person name="Nilsson R."/>
            <person name="Nishiguchi S."/>
            <person name="Nishikawa S."/>
            <person name="Nori F."/>
            <person name="Ohara O."/>
            <person name="Okazaki Y."/>
            <person name="Orlando V."/>
            <person name="Pang K.C."/>
            <person name="Pavan W.J."/>
            <person name="Pavesi G."/>
            <person name="Pesole G."/>
            <person name="Petrovsky N."/>
            <person name="Piazza S."/>
            <person name="Reed J."/>
            <person name="Reid J.F."/>
            <person name="Ring B.Z."/>
            <person name="Ringwald M."/>
            <person name="Rost B."/>
            <person name="Ruan Y."/>
            <person name="Salzberg S.L."/>
            <person name="Sandelin A."/>
            <person name="Schneider C."/>
            <person name="Schoenbach C."/>
            <person name="Sekiguchi K."/>
            <person name="Semple C.A."/>
            <person name="Seno S."/>
            <person name="Sessa L."/>
            <person name="Sheng Y."/>
            <person name="Shibata Y."/>
            <person name="Shimada H."/>
            <person name="Shimada K."/>
            <person name="Silva D."/>
            <person name="Sinclair B."/>
            <person name="Sperling S."/>
            <person name="Stupka E."/>
            <person name="Sugiura K."/>
            <person name="Sultana R."/>
            <person name="Takenaka Y."/>
            <person name="Taki K."/>
            <person name="Tammoja K."/>
            <person name="Tan S.L."/>
            <person name="Tang S."/>
            <person name="Taylor M.S."/>
            <person name="Tegner J."/>
            <person name="Teichmann S.A."/>
            <person name="Ueda H.R."/>
            <person name="van Nimwegen E."/>
            <person name="Verardo R."/>
            <person name="Wei C.L."/>
            <person name="Yagi K."/>
            <person name="Yamanishi H."/>
            <person name="Zabarovsky E."/>
            <person name="Zhu S."/>
            <person name="Zimmer A."/>
            <person name="Hide W."/>
            <person name="Bult C."/>
            <person name="Grimmond S.M."/>
            <person name="Teasdale R.D."/>
            <person name="Liu E.T."/>
            <person name="Brusic V."/>
            <person name="Quackenbush J."/>
            <person name="Wahlestedt C."/>
            <person name="Mattick J.S."/>
            <person name="Hume D.A."/>
            <person name="Kai C."/>
            <person name="Sasaki D."/>
            <person name="Tomaru Y."/>
            <person name="Fukuda S."/>
            <person name="Kanamori-Katayama M."/>
            <person name="Suzuki M."/>
            <person name="Aoki J."/>
            <person name="Arakawa T."/>
            <person name="Iida J."/>
            <person name="Imamura K."/>
            <person name="Itoh M."/>
            <person name="Kato T."/>
            <person name="Kawaji H."/>
            <person name="Kawagashira N."/>
            <person name="Kawashima T."/>
            <person name="Kojima M."/>
            <person name="Kondo S."/>
            <person name="Konno H."/>
            <person name="Nakano K."/>
            <person name="Ninomiya N."/>
            <person name="Nishio T."/>
            <person name="Okada M."/>
            <person name="Plessy C."/>
            <person name="Shibata K."/>
            <person name="Shiraki T."/>
            <person name="Suzuki S."/>
            <person name="Tagami M."/>
            <person name="Waki K."/>
            <person name="Watahiki A."/>
            <person name="Okamura-Oho Y."/>
            <person name="Suzuki H."/>
            <person name="Kawai J."/>
            <person name="Hayashizaki Y."/>
        </authorList>
    </citation>
    <scope>NUCLEOTIDE SEQUENCE [LARGE SCALE MRNA]</scope>
    <source>
        <strain>C57BL/6J</strain>
        <tissue>Pancreas</tissue>
    </source>
</reference>
<reference key="2">
    <citation type="journal article" date="2004" name="Genome Res.">
        <title>The status, quality, and expansion of the NIH full-length cDNA project: the Mammalian Gene Collection (MGC).</title>
        <authorList>
            <consortium name="The MGC Project Team"/>
        </authorList>
    </citation>
    <scope>NUCLEOTIDE SEQUENCE [LARGE SCALE MRNA]</scope>
    <source>
        <strain>FVB/N</strain>
        <tissue>Liver</tissue>
    </source>
</reference>
<feature type="signal peptide" evidence="2">
    <location>
        <begin position="1"/>
        <end position="17"/>
    </location>
</feature>
<feature type="chain" id="PRO_0000271776" description="Transmembrane protein 41A">
    <location>
        <begin position="18"/>
        <end position="264"/>
    </location>
</feature>
<feature type="transmembrane region" description="Helical" evidence="2">
    <location>
        <begin position="67"/>
        <end position="87"/>
    </location>
</feature>
<feature type="transmembrane region" description="Helical" evidence="2">
    <location>
        <begin position="100"/>
        <end position="122"/>
    </location>
</feature>
<feature type="transmembrane region" description="Helical" evidence="2">
    <location>
        <begin position="153"/>
        <end position="173"/>
    </location>
</feature>
<feature type="transmembrane region" description="Helical" evidence="2">
    <location>
        <begin position="175"/>
        <end position="195"/>
    </location>
</feature>
<feature type="transmembrane region" description="Helical" evidence="2">
    <location>
        <begin position="219"/>
        <end position="239"/>
    </location>
</feature>
<feature type="region of interest" description="VTT domain" evidence="1">
    <location>
        <begin position="96"/>
        <end position="207"/>
    </location>
</feature>
<sequence>MRALLGLLLVFGGCTFALYLLSTRLPLGPRLAAAGEPEGRSLWFPSDLAELRELSEVLREYRKEHQAYVFLLFCSAYLYKQGFAIPGSSFLNVLAGALFGPWLGLLLCCVLTSVGATGCYLLSSLFGKQLVISYFPDKVALLQKKVEENRNSLFFFLLFLRLFPMTPNWFLNLSAPILNIPIVQFFFSVLIGLIPYNFICVQTGSILSTLTSLDALFSWETVLKLLAIALVALVPGTLIKKFSQKRLALSETSDIGHPDRRKDA</sequence>
<comment type="subcellular location">
    <subcellularLocation>
        <location evidence="3">Membrane</location>
        <topology evidence="3">Multi-pass membrane protein</topology>
    </subcellularLocation>
</comment>
<comment type="domain">
    <text evidence="1">The VTT domain was previously called the SNARE-assoc domain. As there is no evidence that this domain associates with SNARE proteins, it was renamed as VMP1, TMEM41, and TVP38 (VTT) domain.</text>
</comment>
<comment type="similarity">
    <text evidence="3">Belongs to the TMEM41 family.</text>
</comment>
<evidence type="ECO:0000250" key="1">
    <source>
        <dbReference type="UniProtKB" id="Q96HV5"/>
    </source>
</evidence>
<evidence type="ECO:0000255" key="2"/>
<evidence type="ECO:0000305" key="3"/>
<keyword id="KW-0472">Membrane</keyword>
<keyword id="KW-1185">Reference proteome</keyword>
<keyword id="KW-0732">Signal</keyword>
<keyword id="KW-0812">Transmembrane</keyword>
<keyword id="KW-1133">Transmembrane helix</keyword>
<gene>
    <name type="primary">Tmem41a</name>
</gene>
<name>TM41A_MOUSE</name>
<dbReference type="EMBL" id="AK007685">
    <property type="protein sequence ID" value="BAB25189.1"/>
    <property type="molecule type" value="mRNA"/>
</dbReference>
<dbReference type="EMBL" id="BC019770">
    <property type="protein sequence ID" value="AAH19770.1"/>
    <property type="molecule type" value="mRNA"/>
</dbReference>
<dbReference type="CCDS" id="CCDS28064.1"/>
<dbReference type="RefSeq" id="NP_079969.1">
    <property type="nucleotide sequence ID" value="NM_025693.4"/>
</dbReference>
<dbReference type="FunCoup" id="Q9D8U2">
    <property type="interactions" value="17"/>
</dbReference>
<dbReference type="STRING" id="10090.ENSMUSP00000023562"/>
<dbReference type="PhosphoSitePlus" id="Q9D8U2"/>
<dbReference type="SwissPalm" id="Q9D8U2"/>
<dbReference type="PaxDb" id="10090-ENSMUSP00000023562"/>
<dbReference type="PeptideAtlas" id="Q9D8U2"/>
<dbReference type="ProteomicsDB" id="262829"/>
<dbReference type="Pumba" id="Q9D8U2"/>
<dbReference type="DNASU" id="66664"/>
<dbReference type="Ensembl" id="ENSMUST00000023562.9">
    <property type="protein sequence ID" value="ENSMUSP00000023562.8"/>
    <property type="gene ID" value="ENSMUSG00000022856.10"/>
</dbReference>
<dbReference type="GeneID" id="66664"/>
<dbReference type="KEGG" id="mmu:66664"/>
<dbReference type="UCSC" id="uc007yrs.2">
    <property type="organism name" value="mouse"/>
</dbReference>
<dbReference type="AGR" id="MGI:1913914"/>
<dbReference type="CTD" id="90407"/>
<dbReference type="MGI" id="MGI:1913914">
    <property type="gene designation" value="Tmem41a"/>
</dbReference>
<dbReference type="VEuPathDB" id="HostDB:ENSMUSG00000022856"/>
<dbReference type="eggNOG" id="KOG3140">
    <property type="taxonomic scope" value="Eukaryota"/>
</dbReference>
<dbReference type="GeneTree" id="ENSGT00940000163412"/>
<dbReference type="HOGENOM" id="CLU_038944_0_2_1"/>
<dbReference type="InParanoid" id="Q9D8U2"/>
<dbReference type="OMA" id="WWMTGTG"/>
<dbReference type="OrthoDB" id="3364966at2759"/>
<dbReference type="PhylomeDB" id="Q9D8U2"/>
<dbReference type="TreeFam" id="TF314301"/>
<dbReference type="BioGRID-ORCS" id="66664">
    <property type="hits" value="1 hit in 77 CRISPR screens"/>
</dbReference>
<dbReference type="PRO" id="PR:Q9D8U2"/>
<dbReference type="Proteomes" id="UP000000589">
    <property type="component" value="Chromosome 16"/>
</dbReference>
<dbReference type="RNAct" id="Q9D8U2">
    <property type="molecule type" value="protein"/>
</dbReference>
<dbReference type="Bgee" id="ENSMUSG00000022856">
    <property type="expression patterns" value="Expressed in small intestine Peyer's patch and 255 other cell types or tissues"/>
</dbReference>
<dbReference type="ExpressionAtlas" id="Q9D8U2">
    <property type="expression patterns" value="baseline and differential"/>
</dbReference>
<dbReference type="GO" id="GO:0016020">
    <property type="term" value="C:membrane"/>
    <property type="evidence" value="ECO:0007669"/>
    <property type="project" value="UniProtKB-SubCell"/>
</dbReference>
<dbReference type="InterPro" id="IPR045014">
    <property type="entry name" value="TM41A/B"/>
</dbReference>
<dbReference type="InterPro" id="IPR032816">
    <property type="entry name" value="VTT_dom"/>
</dbReference>
<dbReference type="PANTHER" id="PTHR43220">
    <property type="match status" value="1"/>
</dbReference>
<dbReference type="PANTHER" id="PTHR43220:SF21">
    <property type="entry name" value="TRANSMEMBRANE PROTEIN 41A"/>
    <property type="match status" value="1"/>
</dbReference>
<dbReference type="Pfam" id="PF09335">
    <property type="entry name" value="VTT_dom"/>
    <property type="match status" value="1"/>
</dbReference>
<accession>Q9D8U2</accession>
<organism>
    <name type="scientific">Mus musculus</name>
    <name type="common">Mouse</name>
    <dbReference type="NCBI Taxonomy" id="10090"/>
    <lineage>
        <taxon>Eukaryota</taxon>
        <taxon>Metazoa</taxon>
        <taxon>Chordata</taxon>
        <taxon>Craniata</taxon>
        <taxon>Vertebrata</taxon>
        <taxon>Euteleostomi</taxon>
        <taxon>Mammalia</taxon>
        <taxon>Eutheria</taxon>
        <taxon>Euarchontoglires</taxon>
        <taxon>Glires</taxon>
        <taxon>Rodentia</taxon>
        <taxon>Myomorpha</taxon>
        <taxon>Muroidea</taxon>
        <taxon>Muridae</taxon>
        <taxon>Murinae</taxon>
        <taxon>Mus</taxon>
        <taxon>Mus</taxon>
    </lineage>
</organism>
<protein>
    <recommendedName>
        <fullName>Transmembrane protein 41A</fullName>
    </recommendedName>
</protein>
<proteinExistence type="evidence at transcript level"/>